<organism>
    <name type="scientific">Streptococcus thermophilus (strain ATCC BAA-491 / LMD-9)</name>
    <dbReference type="NCBI Taxonomy" id="322159"/>
    <lineage>
        <taxon>Bacteria</taxon>
        <taxon>Bacillati</taxon>
        <taxon>Bacillota</taxon>
        <taxon>Bacilli</taxon>
        <taxon>Lactobacillales</taxon>
        <taxon>Streptococcaceae</taxon>
        <taxon>Streptococcus</taxon>
    </lineage>
</organism>
<keyword id="KW-0240">DNA-directed RNA polymerase</keyword>
<keyword id="KW-0460">Magnesium</keyword>
<keyword id="KW-0479">Metal-binding</keyword>
<keyword id="KW-0548">Nucleotidyltransferase</keyword>
<keyword id="KW-0804">Transcription</keyword>
<keyword id="KW-0808">Transferase</keyword>
<keyword id="KW-0862">Zinc</keyword>
<reference key="1">
    <citation type="journal article" date="2006" name="Proc. Natl. Acad. Sci. U.S.A.">
        <title>Comparative genomics of the lactic acid bacteria.</title>
        <authorList>
            <person name="Makarova K.S."/>
            <person name="Slesarev A."/>
            <person name="Wolf Y.I."/>
            <person name="Sorokin A."/>
            <person name="Mirkin B."/>
            <person name="Koonin E.V."/>
            <person name="Pavlov A."/>
            <person name="Pavlova N."/>
            <person name="Karamychev V."/>
            <person name="Polouchine N."/>
            <person name="Shakhova V."/>
            <person name="Grigoriev I."/>
            <person name="Lou Y."/>
            <person name="Rohksar D."/>
            <person name="Lucas S."/>
            <person name="Huang K."/>
            <person name="Goodstein D.M."/>
            <person name="Hawkins T."/>
            <person name="Plengvidhya V."/>
            <person name="Welker D."/>
            <person name="Hughes J."/>
            <person name="Goh Y."/>
            <person name="Benson A."/>
            <person name="Baldwin K."/>
            <person name="Lee J.-H."/>
            <person name="Diaz-Muniz I."/>
            <person name="Dosti B."/>
            <person name="Smeianov V."/>
            <person name="Wechter W."/>
            <person name="Barabote R."/>
            <person name="Lorca G."/>
            <person name="Altermann E."/>
            <person name="Barrangou R."/>
            <person name="Ganesan B."/>
            <person name="Xie Y."/>
            <person name="Rawsthorne H."/>
            <person name="Tamir D."/>
            <person name="Parker C."/>
            <person name="Breidt F."/>
            <person name="Broadbent J.R."/>
            <person name="Hutkins R."/>
            <person name="O'Sullivan D."/>
            <person name="Steele J."/>
            <person name="Unlu G."/>
            <person name="Saier M.H. Jr."/>
            <person name="Klaenhammer T."/>
            <person name="Richardson P."/>
            <person name="Kozyavkin S."/>
            <person name="Weimer B.C."/>
            <person name="Mills D.A."/>
        </authorList>
    </citation>
    <scope>NUCLEOTIDE SEQUENCE [LARGE SCALE GENOMIC DNA]</scope>
    <source>
        <strain>ATCC BAA-491 / LMD-9</strain>
    </source>
</reference>
<feature type="chain" id="PRO_0000308892" description="DNA-directed RNA polymerase subunit beta'">
    <location>
        <begin position="1"/>
        <end position="1212"/>
    </location>
</feature>
<feature type="binding site" evidence="1">
    <location>
        <position position="60"/>
    </location>
    <ligand>
        <name>Zn(2+)</name>
        <dbReference type="ChEBI" id="CHEBI:29105"/>
        <label>1</label>
    </ligand>
</feature>
<feature type="binding site" evidence="1">
    <location>
        <position position="62"/>
    </location>
    <ligand>
        <name>Zn(2+)</name>
        <dbReference type="ChEBI" id="CHEBI:29105"/>
        <label>1</label>
    </ligand>
</feature>
<feature type="binding site" evidence="1">
    <location>
        <position position="75"/>
    </location>
    <ligand>
        <name>Zn(2+)</name>
        <dbReference type="ChEBI" id="CHEBI:29105"/>
        <label>1</label>
    </ligand>
</feature>
<feature type="binding site" evidence="1">
    <location>
        <position position="78"/>
    </location>
    <ligand>
        <name>Zn(2+)</name>
        <dbReference type="ChEBI" id="CHEBI:29105"/>
        <label>1</label>
    </ligand>
</feature>
<feature type="binding site" evidence="1">
    <location>
        <position position="450"/>
    </location>
    <ligand>
        <name>Mg(2+)</name>
        <dbReference type="ChEBI" id="CHEBI:18420"/>
    </ligand>
</feature>
<feature type="binding site" evidence="1">
    <location>
        <position position="452"/>
    </location>
    <ligand>
        <name>Mg(2+)</name>
        <dbReference type="ChEBI" id="CHEBI:18420"/>
    </ligand>
</feature>
<feature type="binding site" evidence="1">
    <location>
        <position position="454"/>
    </location>
    <ligand>
        <name>Mg(2+)</name>
        <dbReference type="ChEBI" id="CHEBI:18420"/>
    </ligand>
</feature>
<feature type="binding site" evidence="1">
    <location>
        <position position="819"/>
    </location>
    <ligand>
        <name>Zn(2+)</name>
        <dbReference type="ChEBI" id="CHEBI:29105"/>
        <label>2</label>
    </ligand>
</feature>
<feature type="binding site" evidence="1">
    <location>
        <position position="893"/>
    </location>
    <ligand>
        <name>Zn(2+)</name>
        <dbReference type="ChEBI" id="CHEBI:29105"/>
        <label>2</label>
    </ligand>
</feature>
<feature type="binding site" evidence="1">
    <location>
        <position position="900"/>
    </location>
    <ligand>
        <name>Zn(2+)</name>
        <dbReference type="ChEBI" id="CHEBI:29105"/>
        <label>2</label>
    </ligand>
</feature>
<feature type="binding site" evidence="1">
    <location>
        <position position="903"/>
    </location>
    <ligand>
        <name>Zn(2+)</name>
        <dbReference type="ChEBI" id="CHEBI:29105"/>
        <label>2</label>
    </ligand>
</feature>
<gene>
    <name evidence="1" type="primary">rpoC</name>
    <name type="ordered locus">STER_1844</name>
</gene>
<accession>Q03IK3</accession>
<protein>
    <recommendedName>
        <fullName evidence="1">DNA-directed RNA polymerase subunit beta'</fullName>
        <shortName evidence="1">RNAP subunit beta'</shortName>
        <ecNumber evidence="1">2.7.7.6</ecNumber>
    </recommendedName>
    <alternativeName>
        <fullName evidence="1">RNA polymerase subunit beta'</fullName>
    </alternativeName>
    <alternativeName>
        <fullName evidence="1">Transcriptase subunit beta'</fullName>
    </alternativeName>
</protein>
<proteinExistence type="inferred from homology"/>
<dbReference type="EC" id="2.7.7.6" evidence="1"/>
<dbReference type="EMBL" id="CP000419">
    <property type="protein sequence ID" value="ABJ66969.1"/>
    <property type="molecule type" value="Genomic_DNA"/>
</dbReference>
<dbReference type="RefSeq" id="WP_011681690.1">
    <property type="nucleotide sequence ID" value="NC_008532.1"/>
</dbReference>
<dbReference type="SMR" id="Q03IK3"/>
<dbReference type="KEGG" id="ste:STER_1844"/>
<dbReference type="HOGENOM" id="CLU_000524_3_1_9"/>
<dbReference type="GO" id="GO:0000428">
    <property type="term" value="C:DNA-directed RNA polymerase complex"/>
    <property type="evidence" value="ECO:0007669"/>
    <property type="project" value="UniProtKB-KW"/>
</dbReference>
<dbReference type="GO" id="GO:0003677">
    <property type="term" value="F:DNA binding"/>
    <property type="evidence" value="ECO:0007669"/>
    <property type="project" value="UniProtKB-UniRule"/>
</dbReference>
<dbReference type="GO" id="GO:0003899">
    <property type="term" value="F:DNA-directed RNA polymerase activity"/>
    <property type="evidence" value="ECO:0007669"/>
    <property type="project" value="UniProtKB-UniRule"/>
</dbReference>
<dbReference type="GO" id="GO:0000287">
    <property type="term" value="F:magnesium ion binding"/>
    <property type="evidence" value="ECO:0007669"/>
    <property type="project" value="UniProtKB-UniRule"/>
</dbReference>
<dbReference type="GO" id="GO:0008270">
    <property type="term" value="F:zinc ion binding"/>
    <property type="evidence" value="ECO:0007669"/>
    <property type="project" value="UniProtKB-UniRule"/>
</dbReference>
<dbReference type="GO" id="GO:0006351">
    <property type="term" value="P:DNA-templated transcription"/>
    <property type="evidence" value="ECO:0007669"/>
    <property type="project" value="UniProtKB-UniRule"/>
</dbReference>
<dbReference type="CDD" id="cd02655">
    <property type="entry name" value="RNAP_beta'_C"/>
    <property type="match status" value="1"/>
</dbReference>
<dbReference type="CDD" id="cd01609">
    <property type="entry name" value="RNAP_beta'_N"/>
    <property type="match status" value="1"/>
</dbReference>
<dbReference type="FunFam" id="1.10.150.390:FF:000002">
    <property type="entry name" value="DNA-directed RNA polymerase subunit beta"/>
    <property type="match status" value="1"/>
</dbReference>
<dbReference type="FunFam" id="4.10.860.120:FF:000001">
    <property type="entry name" value="DNA-directed RNA polymerase subunit beta"/>
    <property type="match status" value="1"/>
</dbReference>
<dbReference type="Gene3D" id="1.10.132.30">
    <property type="match status" value="1"/>
</dbReference>
<dbReference type="Gene3D" id="1.10.150.390">
    <property type="match status" value="1"/>
</dbReference>
<dbReference type="Gene3D" id="1.10.1790.20">
    <property type="match status" value="1"/>
</dbReference>
<dbReference type="Gene3D" id="1.10.40.90">
    <property type="match status" value="1"/>
</dbReference>
<dbReference type="Gene3D" id="2.40.40.20">
    <property type="match status" value="1"/>
</dbReference>
<dbReference type="Gene3D" id="2.40.50.100">
    <property type="match status" value="1"/>
</dbReference>
<dbReference type="Gene3D" id="4.10.860.120">
    <property type="entry name" value="RNA polymerase II, clamp domain"/>
    <property type="match status" value="1"/>
</dbReference>
<dbReference type="Gene3D" id="1.10.274.100">
    <property type="entry name" value="RNA polymerase Rpb1, domain 3"/>
    <property type="match status" value="1"/>
</dbReference>
<dbReference type="HAMAP" id="MF_01322">
    <property type="entry name" value="RNApol_bact_RpoC"/>
    <property type="match status" value="1"/>
</dbReference>
<dbReference type="InterPro" id="IPR045867">
    <property type="entry name" value="DNA-dir_RpoC_beta_prime"/>
</dbReference>
<dbReference type="InterPro" id="IPR012754">
    <property type="entry name" value="DNA-dir_RpoC_beta_prime_bact"/>
</dbReference>
<dbReference type="InterPro" id="IPR000722">
    <property type="entry name" value="RNA_pol_asu"/>
</dbReference>
<dbReference type="InterPro" id="IPR006592">
    <property type="entry name" value="RNA_pol_N"/>
</dbReference>
<dbReference type="InterPro" id="IPR007080">
    <property type="entry name" value="RNA_pol_Rpb1_1"/>
</dbReference>
<dbReference type="InterPro" id="IPR007066">
    <property type="entry name" value="RNA_pol_Rpb1_3"/>
</dbReference>
<dbReference type="InterPro" id="IPR042102">
    <property type="entry name" value="RNA_pol_Rpb1_3_sf"/>
</dbReference>
<dbReference type="InterPro" id="IPR007083">
    <property type="entry name" value="RNA_pol_Rpb1_4"/>
</dbReference>
<dbReference type="InterPro" id="IPR007081">
    <property type="entry name" value="RNA_pol_Rpb1_5"/>
</dbReference>
<dbReference type="InterPro" id="IPR044893">
    <property type="entry name" value="RNA_pol_Rpb1_clamp_domain"/>
</dbReference>
<dbReference type="InterPro" id="IPR038120">
    <property type="entry name" value="Rpb1_funnel_sf"/>
</dbReference>
<dbReference type="NCBIfam" id="TIGR02386">
    <property type="entry name" value="rpoC_TIGR"/>
    <property type="match status" value="1"/>
</dbReference>
<dbReference type="PANTHER" id="PTHR19376">
    <property type="entry name" value="DNA-DIRECTED RNA POLYMERASE"/>
    <property type="match status" value="1"/>
</dbReference>
<dbReference type="PANTHER" id="PTHR19376:SF54">
    <property type="entry name" value="DNA-DIRECTED RNA POLYMERASE SUBUNIT BETA"/>
    <property type="match status" value="1"/>
</dbReference>
<dbReference type="Pfam" id="PF04997">
    <property type="entry name" value="RNA_pol_Rpb1_1"/>
    <property type="match status" value="1"/>
</dbReference>
<dbReference type="Pfam" id="PF00623">
    <property type="entry name" value="RNA_pol_Rpb1_2"/>
    <property type="match status" value="1"/>
</dbReference>
<dbReference type="Pfam" id="PF04983">
    <property type="entry name" value="RNA_pol_Rpb1_3"/>
    <property type="match status" value="1"/>
</dbReference>
<dbReference type="Pfam" id="PF05000">
    <property type="entry name" value="RNA_pol_Rpb1_4"/>
    <property type="match status" value="1"/>
</dbReference>
<dbReference type="Pfam" id="PF04998">
    <property type="entry name" value="RNA_pol_Rpb1_5"/>
    <property type="match status" value="1"/>
</dbReference>
<dbReference type="SMART" id="SM00663">
    <property type="entry name" value="RPOLA_N"/>
    <property type="match status" value="1"/>
</dbReference>
<dbReference type="SUPFAM" id="SSF64484">
    <property type="entry name" value="beta and beta-prime subunits of DNA dependent RNA-polymerase"/>
    <property type="match status" value="1"/>
</dbReference>
<name>RPOC_STRTD</name>
<comment type="function">
    <text evidence="1">DNA-dependent RNA polymerase catalyzes the transcription of DNA into RNA using the four ribonucleoside triphosphates as substrates.</text>
</comment>
<comment type="catalytic activity">
    <reaction evidence="1">
        <text>RNA(n) + a ribonucleoside 5'-triphosphate = RNA(n+1) + diphosphate</text>
        <dbReference type="Rhea" id="RHEA:21248"/>
        <dbReference type="Rhea" id="RHEA-COMP:14527"/>
        <dbReference type="Rhea" id="RHEA-COMP:17342"/>
        <dbReference type="ChEBI" id="CHEBI:33019"/>
        <dbReference type="ChEBI" id="CHEBI:61557"/>
        <dbReference type="ChEBI" id="CHEBI:140395"/>
        <dbReference type="EC" id="2.7.7.6"/>
    </reaction>
</comment>
<comment type="cofactor">
    <cofactor evidence="1">
        <name>Mg(2+)</name>
        <dbReference type="ChEBI" id="CHEBI:18420"/>
    </cofactor>
    <text evidence="1">Binds 1 Mg(2+) ion per subunit.</text>
</comment>
<comment type="cofactor">
    <cofactor evidence="1">
        <name>Zn(2+)</name>
        <dbReference type="ChEBI" id="CHEBI:29105"/>
    </cofactor>
    <text evidence="1">Binds 2 Zn(2+) ions per subunit.</text>
</comment>
<comment type="subunit">
    <text evidence="1">The RNAP catalytic core consists of 2 alpha, 1 beta, 1 beta' and 1 omega subunit. When a sigma factor is associated with the core the holoenzyme is formed, which can initiate transcription.</text>
</comment>
<comment type="similarity">
    <text evidence="1">Belongs to the RNA polymerase beta' chain family.</text>
</comment>
<sequence length="1212" mass="135280">MVDVNRFKSMQITLASPTKVRSWSYGEVKKPETINYRTLKPEREGLFDEVIFGPTKDWECACGKYKRIRYKGIVCDRCGVEVTRAKVRRERMGHIELKAPVSHIWYFKGIPSRMGLTLDMSPRALEEVIYFAAYVVIDPKETPLEPKSLLTEREYREKLQEYGHGSFVAKMGAEAIQDLLKQVDLEAEIAELKEELKTATGQKRFKAVRRLDVLDAFYKSGNKPEWMVLNILPVLPPDLRPMVQLDGGRFAASDLNDLYRRVINRNNRLARLLELGAPGIIVQNEKRMLQEAVDALIDNGRRGRPITGPGSRPLKSLSHMLKGKQGRFRQNLLGKRVDFSGRSVIAVGPTLKMYQCGVPRLMAIELFKPFVMREIVAREYAGNVKAAKRMVERGDERIWDILEDVIKEHPVLLNRAPTLHRLGIQAFEPVLIDGKALRLHPLVCEAYNADFDGDQMAIHVPLSEEAQAEARLLLLAAEHILNPKDGKPVVTPSQDMVLGNYYLTMEDEGREGEGMIFKDIDEAVMAYHNGYVHLHSRVGIAVDSMPDKPWKENQLHKILVTTVGKILFNSIIPSEIPYLQETTNENLTDSTPDKYFLEPGQDIQTVIDSLEINAPFKKKHLGNIIAEIFKRLRTTETSAFLDRLKDLGYYYSTLAGLTVGIADIPVIDNKQEIIDAAHHRVEEINKAFRRGLMTEDDRYVAVTTTWREAKDALEKRLIETQDPKNPIVMMMDSGARGNISNFSQLAGMRGLMAAPNGRIMELPILSNFREGLSVLEMFFSTHGARKGMTDTALKTADSGYLTRRLVDVAQDVIIREDDCGTDRGLVIRAITDGKEVTETLEERLFGRYTKKSVKHPETGEVIVGPDTLITEDMAAAIVNAGVEEVTIRSVFTCKTRHGVCRHCYGINLATGDAVEVGEAVGTIAAQSIGEPGTQLTMRTFHTGGVASNTDITQGLPRIQEIFEARNPKGEAVITEVKGTVIEIEEDAATRTKKVFVQGKTGMGEYVVPFTARMKVEVGDEVHRGEALTEGSIQPKRLLEVRDTLSVETYLLAEVQKVYRSQGVEIGDKHVEVMVRQMLRKVRVMDPGDTDLLPGTLMDISDFTDANKDIVISGGVPATSRPVLLGITKASLETNSFLSAASFQETTRVLTDAAIRGKKDHLIGLKENVIIGKIIPAGTGMARYRNIEPLAVNEVEVIENIAVDEAIVESSED</sequence>
<evidence type="ECO:0000255" key="1">
    <source>
        <dbReference type="HAMAP-Rule" id="MF_01322"/>
    </source>
</evidence>